<evidence type="ECO:0000255" key="1"/>
<evidence type="ECO:0000305" key="2"/>
<accession>P53047</accession>
<accession>D6VUZ6</accession>
<accession>E9P922</accession>
<sequence>MAKDGFELYRYTPELGASILFTVLFAVSGVAFVILLFHYSVKSKRRVGSLMKSQPVLRYYGTVNLAGAYIPFIFGCFVECVGFAFRCKSSKDTTLLNPYIIQTVFLLVSPTLYAASIYMIFGRMATLLFAENLMIMPARFNTTIFVIGDVGSLLLQAIGGAMMSKVTSASSGSHLVTAGLFIQIAFFGLFIINEVLFIFKMSKKPTNVSVRYGSWKYLNIALLVNSFLILIRSIVRAVEFIQGYDGEIASHEWYLYIFDGLPMFLLVLIFIVAFPLINIFRIHEESIQAQQSARFDGTDYPDVEVTSIEEDLASKSE</sequence>
<name>RTA1_YEAST</name>
<dbReference type="EMBL" id="X84736">
    <property type="protein sequence ID" value="CAA59227.1"/>
    <property type="molecule type" value="Genomic_DNA"/>
</dbReference>
<dbReference type="EMBL" id="Z72998">
    <property type="protein sequence ID" value="CAA97240.1"/>
    <property type="molecule type" value="Genomic_DNA"/>
</dbReference>
<dbReference type="EMBL" id="AY693143">
    <property type="protein sequence ID" value="AAT93162.1"/>
    <property type="molecule type" value="Genomic_DNA"/>
</dbReference>
<dbReference type="EMBL" id="BK006941">
    <property type="protein sequence ID" value="DAA08307.1"/>
    <property type="molecule type" value="Genomic_DNA"/>
</dbReference>
<dbReference type="PIR" id="S64536">
    <property type="entry name" value="S64536"/>
</dbReference>
<dbReference type="RefSeq" id="NP_011729.1">
    <property type="nucleotide sequence ID" value="NM_001181342.1"/>
</dbReference>
<dbReference type="SMR" id="P53047"/>
<dbReference type="BioGRID" id="33466">
    <property type="interactions" value="19"/>
</dbReference>
<dbReference type="DIP" id="DIP-1599N"/>
<dbReference type="FunCoup" id="P53047">
    <property type="interactions" value="60"/>
</dbReference>
<dbReference type="IntAct" id="P53047">
    <property type="interactions" value="1"/>
</dbReference>
<dbReference type="MINT" id="P53047"/>
<dbReference type="STRING" id="4932.YGR213C"/>
<dbReference type="TCDB" id="9.A.26.1.1">
    <property type="family name" value="the lipid-translocating exporter (lte) family"/>
</dbReference>
<dbReference type="PaxDb" id="4932-YGR213C"/>
<dbReference type="PeptideAtlas" id="P53047"/>
<dbReference type="EnsemblFungi" id="YGR213C_mRNA">
    <property type="protein sequence ID" value="YGR213C"/>
    <property type="gene ID" value="YGR213C"/>
</dbReference>
<dbReference type="GeneID" id="853127"/>
<dbReference type="KEGG" id="sce:YGR213C"/>
<dbReference type="AGR" id="SGD:S000003445"/>
<dbReference type="SGD" id="S000003445">
    <property type="gene designation" value="RTA1"/>
</dbReference>
<dbReference type="VEuPathDB" id="FungiDB:YGR213C"/>
<dbReference type="eggNOG" id="ENOG502QURG">
    <property type="taxonomic scope" value="Eukaryota"/>
</dbReference>
<dbReference type="GeneTree" id="ENSGT00940000176387"/>
<dbReference type="HOGENOM" id="CLU_033465_3_1_1"/>
<dbReference type="InParanoid" id="P53047"/>
<dbReference type="OMA" id="FRCKSSK"/>
<dbReference type="OrthoDB" id="3358017at2759"/>
<dbReference type="BioCyc" id="YEAST:G3O-30895-MONOMER"/>
<dbReference type="BioGRID-ORCS" id="853127">
    <property type="hits" value="0 hits in 10 CRISPR screens"/>
</dbReference>
<dbReference type="PRO" id="PR:P53047"/>
<dbReference type="Proteomes" id="UP000002311">
    <property type="component" value="Chromosome VII"/>
</dbReference>
<dbReference type="RNAct" id="P53047">
    <property type="molecule type" value="protein"/>
</dbReference>
<dbReference type="GO" id="GO:0005783">
    <property type="term" value="C:endoplasmic reticulum"/>
    <property type="evidence" value="ECO:0007005"/>
    <property type="project" value="SGD"/>
</dbReference>
<dbReference type="GO" id="GO:0005886">
    <property type="term" value="C:plasma membrane"/>
    <property type="evidence" value="ECO:0000314"/>
    <property type="project" value="SGD"/>
</dbReference>
<dbReference type="InterPro" id="IPR007568">
    <property type="entry name" value="RTA1"/>
</dbReference>
<dbReference type="PANTHER" id="PTHR31465">
    <property type="entry name" value="PROTEIN RTA1-RELATED"/>
    <property type="match status" value="1"/>
</dbReference>
<dbReference type="PANTHER" id="PTHR31465:SF1">
    <property type="entry name" value="PROTEIN RTA1-RELATED"/>
    <property type="match status" value="1"/>
</dbReference>
<dbReference type="Pfam" id="PF04479">
    <property type="entry name" value="RTA1"/>
    <property type="match status" value="1"/>
</dbReference>
<comment type="function">
    <text>Involved in 7-aminocholesterol resistance.</text>
</comment>
<comment type="subcellular location">
    <subcellularLocation>
        <location>Membrane</location>
        <topology>Multi-pass membrane protein</topology>
    </subcellularLocation>
</comment>
<comment type="similarity">
    <text evidence="2">Belongs to the lipid-translocating exporter (LTE) (TC 9.A.26.1) family.</text>
</comment>
<reference key="1">
    <citation type="journal article" date="1996" name="Curr. Genet.">
        <title>Characterization of the Saccharomyces cerevisiae RTA1 gene involved in 7-aminocholesterol resistance.</title>
        <authorList>
            <person name="Soustre I."/>
            <person name="Letourneux Y."/>
            <person name="Karst F."/>
        </authorList>
    </citation>
    <scope>NUCLEOTIDE SEQUENCE [GENOMIC DNA]</scope>
    <source>
        <strain>ATCC 28383 / FL100 / VTT C-80102</strain>
    </source>
</reference>
<reference key="2">
    <citation type="journal article" date="1997" name="Yeast">
        <title>Sequence analysis of 203 kilobases from Saccharomyces cerevisiae chromosome VII.</title>
        <authorList>
            <person name="Rieger M."/>
            <person name="Brueckner M."/>
            <person name="Schaefer M."/>
            <person name="Mueller-Auer S."/>
        </authorList>
    </citation>
    <scope>NUCLEOTIDE SEQUENCE [GENOMIC DNA]</scope>
    <source>
        <strain>ATCC 204508 / S288c</strain>
    </source>
</reference>
<reference key="3">
    <citation type="journal article" date="1997" name="Nature">
        <title>The nucleotide sequence of Saccharomyces cerevisiae chromosome VII.</title>
        <authorList>
            <person name="Tettelin H."/>
            <person name="Agostoni-Carbone M.L."/>
            <person name="Albermann K."/>
            <person name="Albers M."/>
            <person name="Arroyo J."/>
            <person name="Backes U."/>
            <person name="Barreiros T."/>
            <person name="Bertani I."/>
            <person name="Bjourson A.J."/>
            <person name="Brueckner M."/>
            <person name="Bruschi C.V."/>
            <person name="Carignani G."/>
            <person name="Castagnoli L."/>
            <person name="Cerdan E."/>
            <person name="Clemente M.L."/>
            <person name="Coblenz A."/>
            <person name="Coglievina M."/>
            <person name="Coissac E."/>
            <person name="Defoor E."/>
            <person name="Del Bino S."/>
            <person name="Delius H."/>
            <person name="Delneri D."/>
            <person name="de Wergifosse P."/>
            <person name="Dujon B."/>
            <person name="Durand P."/>
            <person name="Entian K.-D."/>
            <person name="Eraso P."/>
            <person name="Escribano V."/>
            <person name="Fabiani L."/>
            <person name="Fartmann B."/>
            <person name="Feroli F."/>
            <person name="Feuermann M."/>
            <person name="Frontali L."/>
            <person name="Garcia-Gonzalez M."/>
            <person name="Garcia-Saez M.I."/>
            <person name="Goffeau A."/>
            <person name="Guerreiro P."/>
            <person name="Hani J."/>
            <person name="Hansen M."/>
            <person name="Hebling U."/>
            <person name="Hernandez K."/>
            <person name="Heumann K."/>
            <person name="Hilger F."/>
            <person name="Hofmann B."/>
            <person name="Indge K.J."/>
            <person name="James C.M."/>
            <person name="Klima R."/>
            <person name="Koetter P."/>
            <person name="Kramer B."/>
            <person name="Kramer W."/>
            <person name="Lauquin G."/>
            <person name="Leuther H."/>
            <person name="Louis E.J."/>
            <person name="Maillier E."/>
            <person name="Marconi A."/>
            <person name="Martegani E."/>
            <person name="Mazon M.J."/>
            <person name="Mazzoni C."/>
            <person name="McReynolds A.D.K."/>
            <person name="Melchioretto P."/>
            <person name="Mewes H.-W."/>
            <person name="Minenkova O."/>
            <person name="Mueller-Auer S."/>
            <person name="Nawrocki A."/>
            <person name="Netter P."/>
            <person name="Neu R."/>
            <person name="Nombela C."/>
            <person name="Oliver S.G."/>
            <person name="Panzeri L."/>
            <person name="Paoluzi S."/>
            <person name="Plevani P."/>
            <person name="Portetelle D."/>
            <person name="Portillo F."/>
            <person name="Potier S."/>
            <person name="Purnelle B."/>
            <person name="Rieger M."/>
            <person name="Riles L."/>
            <person name="Rinaldi T."/>
            <person name="Robben J."/>
            <person name="Rodrigues-Pousada C."/>
            <person name="Rodriguez-Belmonte E."/>
            <person name="Rodriguez-Torres A.M."/>
            <person name="Rose M."/>
            <person name="Ruzzi M."/>
            <person name="Saliola M."/>
            <person name="Sanchez-Perez M."/>
            <person name="Schaefer B."/>
            <person name="Schaefer M."/>
            <person name="Scharfe M."/>
            <person name="Schmidheini T."/>
            <person name="Schreer A."/>
            <person name="Skala J."/>
            <person name="Souciet J.-L."/>
            <person name="Steensma H.Y."/>
            <person name="Talla E."/>
            <person name="Thierry A."/>
            <person name="Vandenbol M."/>
            <person name="van der Aart Q.J.M."/>
            <person name="Van Dyck L."/>
            <person name="Vanoni M."/>
            <person name="Verhasselt P."/>
            <person name="Voet M."/>
            <person name="Volckaert G."/>
            <person name="Wambutt R."/>
            <person name="Watson M.D."/>
            <person name="Weber N."/>
            <person name="Wedler E."/>
            <person name="Wedler H."/>
            <person name="Wipfli P."/>
            <person name="Wolf K."/>
            <person name="Wright L.F."/>
            <person name="Zaccaria P."/>
            <person name="Zimmermann M."/>
            <person name="Zollner A."/>
            <person name="Kleine K."/>
        </authorList>
    </citation>
    <scope>NUCLEOTIDE SEQUENCE [LARGE SCALE GENOMIC DNA]</scope>
    <source>
        <strain>ATCC 204508 / S288c</strain>
    </source>
</reference>
<reference key="4">
    <citation type="journal article" date="2014" name="G3 (Bethesda)">
        <title>The reference genome sequence of Saccharomyces cerevisiae: Then and now.</title>
        <authorList>
            <person name="Engel S.R."/>
            <person name="Dietrich F.S."/>
            <person name="Fisk D.G."/>
            <person name="Binkley G."/>
            <person name="Balakrishnan R."/>
            <person name="Costanzo M.C."/>
            <person name="Dwight S.S."/>
            <person name="Hitz B.C."/>
            <person name="Karra K."/>
            <person name="Nash R.S."/>
            <person name="Weng S."/>
            <person name="Wong E.D."/>
            <person name="Lloyd P."/>
            <person name="Skrzypek M.S."/>
            <person name="Miyasato S.R."/>
            <person name="Simison M."/>
            <person name="Cherry J.M."/>
        </authorList>
    </citation>
    <scope>GENOME REANNOTATION</scope>
    <source>
        <strain>ATCC 204508 / S288c</strain>
    </source>
</reference>
<reference key="5">
    <citation type="journal article" date="2007" name="Genome Res.">
        <title>Approaching a complete repository of sequence-verified protein-encoding clones for Saccharomyces cerevisiae.</title>
        <authorList>
            <person name="Hu Y."/>
            <person name="Rolfs A."/>
            <person name="Bhullar B."/>
            <person name="Murthy T.V.S."/>
            <person name="Zhu C."/>
            <person name="Berger M.F."/>
            <person name="Camargo A.A."/>
            <person name="Kelley F."/>
            <person name="McCarron S."/>
            <person name="Jepson D."/>
            <person name="Richardson A."/>
            <person name="Raphael J."/>
            <person name="Moreira D."/>
            <person name="Taycher E."/>
            <person name="Zuo D."/>
            <person name="Mohr S."/>
            <person name="Kane M.F."/>
            <person name="Williamson J."/>
            <person name="Simpson A.J.G."/>
            <person name="Bulyk M.L."/>
            <person name="Harlow E."/>
            <person name="Marsischky G."/>
            <person name="Kolodner R.D."/>
            <person name="LaBaer J."/>
        </authorList>
    </citation>
    <scope>NUCLEOTIDE SEQUENCE [GENOMIC DNA]</scope>
    <source>
        <strain>ATCC 204508 / S288c</strain>
    </source>
</reference>
<reference key="6">
    <citation type="journal article" date="2006" name="Proc. Natl. Acad. Sci. U.S.A.">
        <title>A global topology map of the Saccharomyces cerevisiae membrane proteome.</title>
        <authorList>
            <person name="Kim H."/>
            <person name="Melen K."/>
            <person name="Oesterberg M."/>
            <person name="von Heijne G."/>
        </authorList>
    </citation>
    <scope>TOPOLOGY [LARGE SCALE ANALYSIS]</scope>
    <source>
        <strain>ATCC 208353 / W303-1A</strain>
    </source>
</reference>
<protein>
    <recommendedName>
        <fullName>Protein RTA1</fullName>
    </recommendedName>
</protein>
<gene>
    <name type="primary">RTA1</name>
    <name type="ordered locus">YGR213C</name>
</gene>
<proteinExistence type="evidence at protein level"/>
<organism>
    <name type="scientific">Saccharomyces cerevisiae (strain ATCC 204508 / S288c)</name>
    <name type="common">Baker's yeast</name>
    <dbReference type="NCBI Taxonomy" id="559292"/>
    <lineage>
        <taxon>Eukaryota</taxon>
        <taxon>Fungi</taxon>
        <taxon>Dikarya</taxon>
        <taxon>Ascomycota</taxon>
        <taxon>Saccharomycotina</taxon>
        <taxon>Saccharomycetes</taxon>
        <taxon>Saccharomycetales</taxon>
        <taxon>Saccharomycetaceae</taxon>
        <taxon>Saccharomyces</taxon>
    </lineage>
</organism>
<keyword id="KW-0472">Membrane</keyword>
<keyword id="KW-1185">Reference proteome</keyword>
<keyword id="KW-0812">Transmembrane</keyword>
<keyword id="KW-1133">Transmembrane helix</keyword>
<feature type="chain" id="PRO_0000097510" description="Protein RTA1">
    <location>
        <begin position="1"/>
        <end position="317"/>
    </location>
</feature>
<feature type="topological domain" description="Extracellular" evidence="1">
    <location>
        <begin position="1"/>
        <end position="16"/>
    </location>
</feature>
<feature type="transmembrane region" description="Helical" evidence="1">
    <location>
        <begin position="17"/>
        <end position="37"/>
    </location>
</feature>
<feature type="topological domain" description="Cytoplasmic" evidence="1">
    <location>
        <begin position="38"/>
        <end position="64"/>
    </location>
</feature>
<feature type="transmembrane region" description="Helical" evidence="1">
    <location>
        <begin position="65"/>
        <end position="85"/>
    </location>
</feature>
<feature type="topological domain" description="Extracellular" evidence="1">
    <location>
        <begin position="86"/>
        <end position="99"/>
    </location>
</feature>
<feature type="transmembrane region" description="Helical" evidence="1">
    <location>
        <begin position="100"/>
        <end position="120"/>
    </location>
</feature>
<feature type="topological domain" description="Cytoplasmic" evidence="1">
    <location>
        <begin position="121"/>
        <end position="142"/>
    </location>
</feature>
<feature type="transmembrane region" description="Helical" evidence="1">
    <location>
        <begin position="143"/>
        <end position="163"/>
    </location>
</feature>
<feature type="topological domain" description="Extracellular" evidence="1">
    <location>
        <begin position="164"/>
        <end position="178"/>
    </location>
</feature>
<feature type="transmembrane region" description="Helical" evidence="1">
    <location>
        <begin position="179"/>
        <end position="199"/>
    </location>
</feature>
<feature type="topological domain" description="Cytoplasmic" evidence="1">
    <location>
        <begin position="200"/>
        <end position="214"/>
    </location>
</feature>
<feature type="transmembrane region" description="Helical" evidence="1">
    <location>
        <begin position="215"/>
        <end position="235"/>
    </location>
</feature>
<feature type="topological domain" description="Extracellular" evidence="1">
    <location>
        <begin position="236"/>
        <end position="259"/>
    </location>
</feature>
<feature type="transmembrane region" description="Helical" evidence="1">
    <location>
        <begin position="260"/>
        <end position="280"/>
    </location>
</feature>
<feature type="topological domain" description="Cytoplasmic" evidence="1">
    <location>
        <begin position="281"/>
        <end position="317"/>
    </location>
</feature>
<feature type="sequence conflict" description="In Ref. 5; AAT93162." evidence="2" ref="5">
    <original>I</original>
    <variation>V</variation>
    <location>
        <position position="234"/>
    </location>
</feature>